<name>RL34_SHELP</name>
<gene>
    <name evidence="1" type="primary">rpmH</name>
    <name type="ordered locus">Shew_3869</name>
</gene>
<feature type="chain" id="PRO_1000013442" description="Large ribosomal subunit protein bL34">
    <location>
        <begin position="1"/>
        <end position="45"/>
    </location>
</feature>
<feature type="region of interest" description="Disordered" evidence="2">
    <location>
        <begin position="1"/>
        <end position="21"/>
    </location>
</feature>
<feature type="compositionally biased region" description="Polar residues" evidence="2">
    <location>
        <begin position="1"/>
        <end position="10"/>
    </location>
</feature>
<feature type="compositionally biased region" description="Basic residues" evidence="2">
    <location>
        <begin position="11"/>
        <end position="20"/>
    </location>
</feature>
<keyword id="KW-1185">Reference proteome</keyword>
<keyword id="KW-0687">Ribonucleoprotein</keyword>
<keyword id="KW-0689">Ribosomal protein</keyword>
<organism>
    <name type="scientific">Shewanella loihica (strain ATCC BAA-1088 / PV-4)</name>
    <dbReference type="NCBI Taxonomy" id="323850"/>
    <lineage>
        <taxon>Bacteria</taxon>
        <taxon>Pseudomonadati</taxon>
        <taxon>Pseudomonadota</taxon>
        <taxon>Gammaproteobacteria</taxon>
        <taxon>Alteromonadales</taxon>
        <taxon>Shewanellaceae</taxon>
        <taxon>Shewanella</taxon>
    </lineage>
</organism>
<sequence>MSKRTFQPSNLKRKRSHGFRARMATVGGRKVIARRRAKGRARLSA</sequence>
<accession>A3QJT4</accession>
<protein>
    <recommendedName>
        <fullName evidence="1">Large ribosomal subunit protein bL34</fullName>
    </recommendedName>
    <alternativeName>
        <fullName evidence="3">50S ribosomal protein L34</fullName>
    </alternativeName>
</protein>
<comment type="similarity">
    <text evidence="1">Belongs to the bacterial ribosomal protein bL34 family.</text>
</comment>
<dbReference type="EMBL" id="CP000606">
    <property type="protein sequence ID" value="ABO25732.1"/>
    <property type="molecule type" value="Genomic_DNA"/>
</dbReference>
<dbReference type="RefSeq" id="WP_011867659.1">
    <property type="nucleotide sequence ID" value="NC_009092.1"/>
</dbReference>
<dbReference type="SMR" id="A3QJT4"/>
<dbReference type="STRING" id="323850.Shew_3869"/>
<dbReference type="KEGG" id="slo:Shew_3869"/>
<dbReference type="eggNOG" id="COG0230">
    <property type="taxonomic scope" value="Bacteria"/>
</dbReference>
<dbReference type="HOGENOM" id="CLU_129938_2_0_6"/>
<dbReference type="OrthoDB" id="9804164at2"/>
<dbReference type="Proteomes" id="UP000001558">
    <property type="component" value="Chromosome"/>
</dbReference>
<dbReference type="GO" id="GO:1990904">
    <property type="term" value="C:ribonucleoprotein complex"/>
    <property type="evidence" value="ECO:0007669"/>
    <property type="project" value="UniProtKB-KW"/>
</dbReference>
<dbReference type="GO" id="GO:0005840">
    <property type="term" value="C:ribosome"/>
    <property type="evidence" value="ECO:0007669"/>
    <property type="project" value="UniProtKB-KW"/>
</dbReference>
<dbReference type="GO" id="GO:0003735">
    <property type="term" value="F:structural constituent of ribosome"/>
    <property type="evidence" value="ECO:0007669"/>
    <property type="project" value="InterPro"/>
</dbReference>
<dbReference type="GO" id="GO:0006412">
    <property type="term" value="P:translation"/>
    <property type="evidence" value="ECO:0007669"/>
    <property type="project" value="UniProtKB-UniRule"/>
</dbReference>
<dbReference type="FunFam" id="1.10.287.3980:FF:000001">
    <property type="entry name" value="Mitochondrial ribosomal protein L34"/>
    <property type="match status" value="1"/>
</dbReference>
<dbReference type="Gene3D" id="1.10.287.3980">
    <property type="match status" value="1"/>
</dbReference>
<dbReference type="HAMAP" id="MF_00391">
    <property type="entry name" value="Ribosomal_bL34"/>
    <property type="match status" value="1"/>
</dbReference>
<dbReference type="InterPro" id="IPR000271">
    <property type="entry name" value="Ribosomal_bL34"/>
</dbReference>
<dbReference type="InterPro" id="IPR020939">
    <property type="entry name" value="Ribosomal_bL34_CS"/>
</dbReference>
<dbReference type="NCBIfam" id="TIGR01030">
    <property type="entry name" value="rpmH_bact"/>
    <property type="match status" value="1"/>
</dbReference>
<dbReference type="PANTHER" id="PTHR14503:SF4">
    <property type="entry name" value="LARGE RIBOSOMAL SUBUNIT PROTEIN BL34M"/>
    <property type="match status" value="1"/>
</dbReference>
<dbReference type="PANTHER" id="PTHR14503">
    <property type="entry name" value="MITOCHONDRIAL RIBOSOMAL PROTEIN 34 FAMILY MEMBER"/>
    <property type="match status" value="1"/>
</dbReference>
<dbReference type="Pfam" id="PF00468">
    <property type="entry name" value="Ribosomal_L34"/>
    <property type="match status" value="1"/>
</dbReference>
<dbReference type="PROSITE" id="PS00784">
    <property type="entry name" value="RIBOSOMAL_L34"/>
    <property type="match status" value="1"/>
</dbReference>
<evidence type="ECO:0000255" key="1">
    <source>
        <dbReference type="HAMAP-Rule" id="MF_00391"/>
    </source>
</evidence>
<evidence type="ECO:0000256" key="2">
    <source>
        <dbReference type="SAM" id="MobiDB-lite"/>
    </source>
</evidence>
<evidence type="ECO:0000305" key="3"/>
<proteinExistence type="inferred from homology"/>
<reference key="1">
    <citation type="submission" date="2007-03" db="EMBL/GenBank/DDBJ databases">
        <title>Complete sequence of Shewanella loihica PV-4.</title>
        <authorList>
            <consortium name="US DOE Joint Genome Institute"/>
            <person name="Copeland A."/>
            <person name="Lucas S."/>
            <person name="Lapidus A."/>
            <person name="Barry K."/>
            <person name="Detter J.C."/>
            <person name="Glavina del Rio T."/>
            <person name="Hammon N."/>
            <person name="Israni S."/>
            <person name="Dalin E."/>
            <person name="Tice H."/>
            <person name="Pitluck S."/>
            <person name="Chain P."/>
            <person name="Malfatti S."/>
            <person name="Shin M."/>
            <person name="Vergez L."/>
            <person name="Schmutz J."/>
            <person name="Larimer F."/>
            <person name="Land M."/>
            <person name="Hauser L."/>
            <person name="Kyrpides N."/>
            <person name="Mikhailova N."/>
            <person name="Romine M.F."/>
            <person name="Serres G."/>
            <person name="Fredrickson J."/>
            <person name="Tiedje J."/>
            <person name="Richardson P."/>
        </authorList>
    </citation>
    <scope>NUCLEOTIDE SEQUENCE [LARGE SCALE GENOMIC DNA]</scope>
    <source>
        <strain>ATCC BAA-1088 / PV-4</strain>
    </source>
</reference>